<accession>Q9SVH0</accession>
<organism>
    <name type="scientific">Arabidopsis thaliana</name>
    <name type="common">Mouse-ear cress</name>
    <dbReference type="NCBI Taxonomy" id="3702"/>
    <lineage>
        <taxon>Eukaryota</taxon>
        <taxon>Viridiplantae</taxon>
        <taxon>Streptophyta</taxon>
        <taxon>Embryophyta</taxon>
        <taxon>Tracheophyta</taxon>
        <taxon>Spermatophyta</taxon>
        <taxon>Magnoliopsida</taxon>
        <taxon>eudicotyledons</taxon>
        <taxon>Gunneridae</taxon>
        <taxon>Pentapetalae</taxon>
        <taxon>rosids</taxon>
        <taxon>malvids</taxon>
        <taxon>Brassicales</taxon>
        <taxon>Brassicaceae</taxon>
        <taxon>Camelineae</taxon>
        <taxon>Arabidopsis</taxon>
    </lineage>
</organism>
<proteinExistence type="inferred from homology"/>
<feature type="chain" id="PRO_0000363446" description="Pentatricopeptide repeat-containing protein At4g20770">
    <location>
        <begin position="1"/>
        <end position="774"/>
    </location>
</feature>
<feature type="repeat" description="PPR 1">
    <location>
        <begin position="5"/>
        <end position="39"/>
    </location>
</feature>
<feature type="repeat" description="PPR 2">
    <location>
        <begin position="40"/>
        <end position="70"/>
    </location>
</feature>
<feature type="repeat" description="PPR 3">
    <location>
        <begin position="71"/>
        <end position="101"/>
    </location>
</feature>
<feature type="repeat" description="PPR 4">
    <location>
        <begin position="102"/>
        <end position="136"/>
    </location>
</feature>
<feature type="repeat" description="PPR 5">
    <location>
        <begin position="137"/>
        <end position="171"/>
    </location>
</feature>
<feature type="repeat" description="PPR 6">
    <location>
        <begin position="172"/>
        <end position="203"/>
    </location>
</feature>
<feature type="repeat" description="PPR 7">
    <location>
        <begin position="204"/>
        <end position="238"/>
    </location>
</feature>
<feature type="repeat" description="PPR 8">
    <location>
        <begin position="239"/>
        <end position="270"/>
    </location>
</feature>
<feature type="repeat" description="PPR 9">
    <location>
        <begin position="283"/>
        <end position="313"/>
    </location>
</feature>
<feature type="repeat" description="PPR 10">
    <location>
        <begin position="314"/>
        <end position="348"/>
    </location>
</feature>
<feature type="repeat" description="PPR 11">
    <location>
        <begin position="349"/>
        <end position="379"/>
    </location>
</feature>
<feature type="repeat" description="PPR 12">
    <location>
        <begin position="380"/>
        <end position="414"/>
    </location>
</feature>
<feature type="repeat" description="PPR 13">
    <location>
        <begin position="415"/>
        <end position="449"/>
    </location>
</feature>
<feature type="repeat" description="PPR 14">
    <location>
        <begin position="450"/>
        <end position="480"/>
    </location>
</feature>
<feature type="repeat" description="PPR 15">
    <location>
        <begin position="482"/>
        <end position="516"/>
    </location>
</feature>
<feature type="repeat" description="PPR 16">
    <location>
        <begin position="518"/>
        <end position="552"/>
    </location>
</feature>
<feature type="repeat" description="PPR 17">
    <location>
        <begin position="553"/>
        <end position="583"/>
    </location>
</feature>
<feature type="repeat" description="PPR 18">
    <location>
        <begin position="584"/>
        <end position="618"/>
    </location>
</feature>
<feature type="repeat" description="PPR 19">
    <location>
        <begin position="619"/>
        <end position="654"/>
    </location>
</feature>
<feature type="repeat" description="PPR 20">
    <location>
        <begin position="655"/>
        <end position="685"/>
    </location>
</feature>
<feature type="region of interest" description="Type E motif">
    <location>
        <begin position="690"/>
        <end position="765"/>
    </location>
</feature>
<evidence type="ECO:0000305" key="1"/>
<comment type="similarity">
    <text evidence="1">Belongs to the PPR family. PCMP-E subfamily.</text>
</comment>
<comment type="sequence caution" evidence="1">
    <conflict type="erroneous initiation">
        <sequence resource="EMBL-CDS" id="CAB45843"/>
    </conflict>
</comment>
<comment type="sequence caution" evidence="1">
    <conflict type="erroneous initiation">
        <sequence resource="EMBL-CDS" id="CAB79077"/>
    </conflict>
</comment>
<comment type="online information" name="Pentatricopeptide repeat proteins">
    <link uri="https://ppr.plantenergy.uwa.edu.au"/>
</comment>
<reference key="1">
    <citation type="journal article" date="1999" name="Nature">
        <title>Sequence and analysis of chromosome 4 of the plant Arabidopsis thaliana.</title>
        <authorList>
            <person name="Mayer K.F.X."/>
            <person name="Schueller C."/>
            <person name="Wambutt R."/>
            <person name="Murphy G."/>
            <person name="Volckaert G."/>
            <person name="Pohl T."/>
            <person name="Duesterhoeft A."/>
            <person name="Stiekema W."/>
            <person name="Entian K.-D."/>
            <person name="Terryn N."/>
            <person name="Harris B."/>
            <person name="Ansorge W."/>
            <person name="Brandt P."/>
            <person name="Grivell L.A."/>
            <person name="Rieger M."/>
            <person name="Weichselgartner M."/>
            <person name="de Simone V."/>
            <person name="Obermaier B."/>
            <person name="Mache R."/>
            <person name="Mueller M."/>
            <person name="Kreis M."/>
            <person name="Delseny M."/>
            <person name="Puigdomenech P."/>
            <person name="Watson M."/>
            <person name="Schmidtheini T."/>
            <person name="Reichert B."/>
            <person name="Portetelle D."/>
            <person name="Perez-Alonso M."/>
            <person name="Boutry M."/>
            <person name="Bancroft I."/>
            <person name="Vos P."/>
            <person name="Hoheisel J."/>
            <person name="Zimmermann W."/>
            <person name="Wedler H."/>
            <person name="Ridley P."/>
            <person name="Langham S.-A."/>
            <person name="McCullagh B."/>
            <person name="Bilham L."/>
            <person name="Robben J."/>
            <person name="van der Schueren J."/>
            <person name="Grymonprez B."/>
            <person name="Chuang Y.-J."/>
            <person name="Vandenbussche F."/>
            <person name="Braeken M."/>
            <person name="Weltjens I."/>
            <person name="Voet M."/>
            <person name="Bastiaens I."/>
            <person name="Aert R."/>
            <person name="Defoor E."/>
            <person name="Weitzenegger T."/>
            <person name="Bothe G."/>
            <person name="Ramsperger U."/>
            <person name="Hilbert H."/>
            <person name="Braun M."/>
            <person name="Holzer E."/>
            <person name="Brandt A."/>
            <person name="Peters S."/>
            <person name="van Staveren M."/>
            <person name="Dirkse W."/>
            <person name="Mooijman P."/>
            <person name="Klein Lankhorst R."/>
            <person name="Rose M."/>
            <person name="Hauf J."/>
            <person name="Koetter P."/>
            <person name="Berneiser S."/>
            <person name="Hempel S."/>
            <person name="Feldpausch M."/>
            <person name="Lamberth S."/>
            <person name="Van den Daele H."/>
            <person name="De Keyser A."/>
            <person name="Buysshaert C."/>
            <person name="Gielen J."/>
            <person name="Villarroel R."/>
            <person name="De Clercq R."/>
            <person name="van Montagu M."/>
            <person name="Rogers J."/>
            <person name="Cronin A."/>
            <person name="Quail M.A."/>
            <person name="Bray-Allen S."/>
            <person name="Clark L."/>
            <person name="Doggett J."/>
            <person name="Hall S."/>
            <person name="Kay M."/>
            <person name="Lennard N."/>
            <person name="McLay K."/>
            <person name="Mayes R."/>
            <person name="Pettett A."/>
            <person name="Rajandream M.A."/>
            <person name="Lyne M."/>
            <person name="Benes V."/>
            <person name="Rechmann S."/>
            <person name="Borkova D."/>
            <person name="Bloecker H."/>
            <person name="Scharfe M."/>
            <person name="Grimm M."/>
            <person name="Loehnert T.-H."/>
            <person name="Dose S."/>
            <person name="de Haan M."/>
            <person name="Maarse A.C."/>
            <person name="Schaefer M."/>
            <person name="Mueller-Auer S."/>
            <person name="Gabel C."/>
            <person name="Fuchs M."/>
            <person name="Fartmann B."/>
            <person name="Granderath K."/>
            <person name="Dauner D."/>
            <person name="Herzl A."/>
            <person name="Neumann S."/>
            <person name="Argiriou A."/>
            <person name="Vitale D."/>
            <person name="Liguori R."/>
            <person name="Piravandi E."/>
            <person name="Massenet O."/>
            <person name="Quigley F."/>
            <person name="Clabauld G."/>
            <person name="Muendlein A."/>
            <person name="Felber R."/>
            <person name="Schnabl S."/>
            <person name="Hiller R."/>
            <person name="Schmidt W."/>
            <person name="Lecharny A."/>
            <person name="Aubourg S."/>
            <person name="Chefdor F."/>
            <person name="Cooke R."/>
            <person name="Berger C."/>
            <person name="Monfort A."/>
            <person name="Casacuberta E."/>
            <person name="Gibbons T."/>
            <person name="Weber N."/>
            <person name="Vandenbol M."/>
            <person name="Bargues M."/>
            <person name="Terol J."/>
            <person name="Torres A."/>
            <person name="Perez-Perez A."/>
            <person name="Purnelle B."/>
            <person name="Bent E."/>
            <person name="Johnson S."/>
            <person name="Tacon D."/>
            <person name="Jesse T."/>
            <person name="Heijnen L."/>
            <person name="Schwarz S."/>
            <person name="Scholler P."/>
            <person name="Heber S."/>
            <person name="Francs P."/>
            <person name="Bielke C."/>
            <person name="Frishman D."/>
            <person name="Haase D."/>
            <person name="Lemcke K."/>
            <person name="Mewes H.-W."/>
            <person name="Stocker S."/>
            <person name="Zaccaria P."/>
            <person name="Bevan M."/>
            <person name="Wilson R.K."/>
            <person name="de la Bastide M."/>
            <person name="Habermann K."/>
            <person name="Parnell L."/>
            <person name="Dedhia N."/>
            <person name="Gnoj L."/>
            <person name="Schutz K."/>
            <person name="Huang E."/>
            <person name="Spiegel L."/>
            <person name="Sekhon M."/>
            <person name="Murray J."/>
            <person name="Sheet P."/>
            <person name="Cordes M."/>
            <person name="Abu-Threideh J."/>
            <person name="Stoneking T."/>
            <person name="Kalicki J."/>
            <person name="Graves T."/>
            <person name="Harmon G."/>
            <person name="Edwards J."/>
            <person name="Latreille P."/>
            <person name="Courtney L."/>
            <person name="Cloud J."/>
            <person name="Abbott A."/>
            <person name="Scott K."/>
            <person name="Johnson D."/>
            <person name="Minx P."/>
            <person name="Bentley D."/>
            <person name="Fulton B."/>
            <person name="Miller N."/>
            <person name="Greco T."/>
            <person name="Kemp K."/>
            <person name="Kramer J."/>
            <person name="Fulton L."/>
            <person name="Mardis E."/>
            <person name="Dante M."/>
            <person name="Pepin K."/>
            <person name="Hillier L.W."/>
            <person name="Nelson J."/>
            <person name="Spieth J."/>
            <person name="Ryan E."/>
            <person name="Andrews S."/>
            <person name="Geisel C."/>
            <person name="Layman D."/>
            <person name="Du H."/>
            <person name="Ali J."/>
            <person name="Berghoff A."/>
            <person name="Jones K."/>
            <person name="Drone K."/>
            <person name="Cotton M."/>
            <person name="Joshu C."/>
            <person name="Antonoiu B."/>
            <person name="Zidanic M."/>
            <person name="Strong C."/>
            <person name="Sun H."/>
            <person name="Lamar B."/>
            <person name="Yordan C."/>
            <person name="Ma P."/>
            <person name="Zhong J."/>
            <person name="Preston R."/>
            <person name="Vil D."/>
            <person name="Shekher M."/>
            <person name="Matero A."/>
            <person name="Shah R."/>
            <person name="Swaby I.K."/>
            <person name="O'Shaughnessy A."/>
            <person name="Rodriguez M."/>
            <person name="Hoffman J."/>
            <person name="Till S."/>
            <person name="Granat S."/>
            <person name="Shohdy N."/>
            <person name="Hasegawa A."/>
            <person name="Hameed A."/>
            <person name="Lodhi M."/>
            <person name="Johnson A."/>
            <person name="Chen E."/>
            <person name="Marra M.A."/>
            <person name="Martienssen R."/>
            <person name="McCombie W.R."/>
        </authorList>
    </citation>
    <scope>NUCLEOTIDE SEQUENCE [LARGE SCALE GENOMIC DNA]</scope>
    <source>
        <strain>cv. Columbia</strain>
    </source>
</reference>
<reference key="2">
    <citation type="journal article" date="2017" name="Plant J.">
        <title>Araport11: a complete reannotation of the Arabidopsis thaliana reference genome.</title>
        <authorList>
            <person name="Cheng C.Y."/>
            <person name="Krishnakumar V."/>
            <person name="Chan A.P."/>
            <person name="Thibaud-Nissen F."/>
            <person name="Schobel S."/>
            <person name="Town C.D."/>
        </authorList>
    </citation>
    <scope>GENOME REANNOTATION</scope>
    <source>
        <strain>cv. Columbia</strain>
    </source>
</reference>
<reference key="3">
    <citation type="journal article" date="2000" name="Plant Mol. Biol.">
        <title>In Arabidopsis thaliana, 1% of the genome codes for a novel protein family unique to plants.</title>
        <authorList>
            <person name="Aubourg S."/>
            <person name="Boudet N."/>
            <person name="Kreis M."/>
            <person name="Lecharny A."/>
        </authorList>
    </citation>
    <scope>GENE FAMILY</scope>
</reference>
<reference key="4">
    <citation type="journal article" date="2004" name="Plant Cell">
        <title>Genome-wide analysis of Arabidopsis pentatricopeptide repeat proteins reveals their essential role in organelle biogenesis.</title>
        <authorList>
            <person name="Lurin C."/>
            <person name="Andres C."/>
            <person name="Aubourg S."/>
            <person name="Bellaoui M."/>
            <person name="Bitton F."/>
            <person name="Bruyere C."/>
            <person name="Caboche M."/>
            <person name="Debast C."/>
            <person name="Gualberto J."/>
            <person name="Hoffmann B."/>
            <person name="Lecharny A."/>
            <person name="Le Ret M."/>
            <person name="Martin-Magniette M.-L."/>
            <person name="Mireau H."/>
            <person name="Peeters N."/>
            <person name="Renou J.-P."/>
            <person name="Szurek B."/>
            <person name="Taconnat L."/>
            <person name="Small I."/>
        </authorList>
    </citation>
    <scope>GENE FAMILY</scope>
</reference>
<sequence length="774" mass="86377">MRSGGNKYLASLLRCYRDERCKLSGKVIHGFIVRMGMKSDTYLCNRLLDLYIECGDGDYARKVFDEMSVRDVYSWNAFLTFRCKVGDLGEACEVFDGMPERDVVSWNNMISVLVRKGFEEKALVVYKRMVCDGFLPSRFTLASVLSACSKVLDGVFGMRCHGVAVKTGLDKNIFVGNALLSMYAKCGFIVDYGVRVFESLSQPNEVSYTAVIGGLARENKVLEAVQMFRLMCEKGVQVDSVCLSNILSISAPREGCDSLSEIYGNELGKQIHCLALRLGFGGDLHLNNSLLEIYAKNKDMNGAELIFAEMPEVNVVSWNIMIVGFGQEYRSDKSVEFLTRMRDSGFQPNEVTCISVLGACFRSGDVETGRRIFSSIPQPSVSAWNAMLSGYSNYEHYEEAISNFRQMQFQNLKPDKTTLSVILSSCARLRFLEGGKQIHGVVIRTEISKNSHIVSGLIAVYSECEKMEISECIFDDCINELDIACWNSMISGFRHNMLDTKALILFRRMHQTAVLCPNETSFATVLSSCSRLCSLLHGRQFHGLVVKSGYVSDSFVETALTDMYCKCGEIDSARQFFDAVLRKNTVIWNEMIHGYGHNGRGDEAVGLYRKMISSGEKPDGITFVSVLTACSHSGLVETGLEILSSMQRIHGIEPELDHYICIVDCLGRAGRLEDAEKLAEATPYKSSSVLWEILLSSCRVHGDVSLARRVAEKLMRLDPQSSAAYVLLSNTYSSLRQWDDSAALQGLMNKNRVHKTPGQSWTTYGNDLDSGFRK</sequence>
<dbReference type="EMBL" id="AL080254">
    <property type="protein sequence ID" value="CAB45843.1"/>
    <property type="status" value="ALT_INIT"/>
    <property type="molecule type" value="Genomic_DNA"/>
</dbReference>
<dbReference type="EMBL" id="AL161553">
    <property type="protein sequence ID" value="CAB79077.1"/>
    <property type="status" value="ALT_INIT"/>
    <property type="molecule type" value="Genomic_DNA"/>
</dbReference>
<dbReference type="EMBL" id="CP002687">
    <property type="protein sequence ID" value="AEE84359.1"/>
    <property type="molecule type" value="Genomic_DNA"/>
</dbReference>
<dbReference type="PIR" id="T10619">
    <property type="entry name" value="T10619"/>
</dbReference>
<dbReference type="RefSeq" id="NP_193809.2">
    <property type="nucleotide sequence ID" value="NM_118195.2"/>
</dbReference>
<dbReference type="SMR" id="Q9SVH0"/>
<dbReference type="FunCoup" id="Q9SVH0">
    <property type="interactions" value="254"/>
</dbReference>
<dbReference type="PaxDb" id="3702-AT4G20770.1"/>
<dbReference type="ProteomicsDB" id="249229"/>
<dbReference type="EnsemblPlants" id="AT4G20770.1">
    <property type="protein sequence ID" value="AT4G20770.1"/>
    <property type="gene ID" value="AT4G20770"/>
</dbReference>
<dbReference type="GeneID" id="827825"/>
<dbReference type="Gramene" id="AT4G20770.1">
    <property type="protein sequence ID" value="AT4G20770.1"/>
    <property type="gene ID" value="AT4G20770"/>
</dbReference>
<dbReference type="KEGG" id="ath:AT4G20770"/>
<dbReference type="Araport" id="AT4G20770"/>
<dbReference type="TAIR" id="AT4G20770"/>
<dbReference type="eggNOG" id="KOG4197">
    <property type="taxonomic scope" value="Eukaryota"/>
</dbReference>
<dbReference type="HOGENOM" id="CLU_002706_15_10_1"/>
<dbReference type="InParanoid" id="Q9SVH0"/>
<dbReference type="OMA" id="CIDKKAH"/>
<dbReference type="OrthoDB" id="185373at2759"/>
<dbReference type="PhylomeDB" id="Q9SVH0"/>
<dbReference type="PRO" id="PR:Q9SVH0"/>
<dbReference type="Proteomes" id="UP000006548">
    <property type="component" value="Chromosome 4"/>
</dbReference>
<dbReference type="ExpressionAtlas" id="Q9SVH0">
    <property type="expression patterns" value="baseline and differential"/>
</dbReference>
<dbReference type="GO" id="GO:0003723">
    <property type="term" value="F:RNA binding"/>
    <property type="evidence" value="ECO:0007669"/>
    <property type="project" value="InterPro"/>
</dbReference>
<dbReference type="GO" id="GO:0009451">
    <property type="term" value="P:RNA modification"/>
    <property type="evidence" value="ECO:0007669"/>
    <property type="project" value="InterPro"/>
</dbReference>
<dbReference type="FunFam" id="1.25.40.10:FF:000688">
    <property type="entry name" value="Pentatricopeptide repeat-containing protein"/>
    <property type="match status" value="1"/>
</dbReference>
<dbReference type="FunFam" id="1.25.40.10:FF:000782">
    <property type="entry name" value="Pentatricopeptide repeat-containing protein"/>
    <property type="match status" value="1"/>
</dbReference>
<dbReference type="FunFam" id="1.25.40.10:FF:000442">
    <property type="entry name" value="Pentatricopeptide repeat-containing protein At3g49710"/>
    <property type="match status" value="1"/>
</dbReference>
<dbReference type="FunFam" id="1.25.40.10:FF:000090">
    <property type="entry name" value="Pentatricopeptide repeat-containing protein, chloroplastic"/>
    <property type="match status" value="1"/>
</dbReference>
<dbReference type="Gene3D" id="1.25.40.10">
    <property type="entry name" value="Tetratricopeptide repeat domain"/>
    <property type="match status" value="6"/>
</dbReference>
<dbReference type="InterPro" id="IPR046848">
    <property type="entry name" value="E_motif"/>
</dbReference>
<dbReference type="InterPro" id="IPR002885">
    <property type="entry name" value="Pentatricopeptide_rpt"/>
</dbReference>
<dbReference type="InterPro" id="IPR046960">
    <property type="entry name" value="PPR_At4g14850-like_plant"/>
</dbReference>
<dbReference type="InterPro" id="IPR011990">
    <property type="entry name" value="TPR-like_helical_dom_sf"/>
</dbReference>
<dbReference type="NCBIfam" id="TIGR00756">
    <property type="entry name" value="PPR"/>
    <property type="match status" value="6"/>
</dbReference>
<dbReference type="PANTHER" id="PTHR47926:SF343">
    <property type="entry name" value="PENTACOTRIPEPTIDE-REPEAT REGION OF PRORP DOMAIN-CONTAINING PROTEIN"/>
    <property type="match status" value="1"/>
</dbReference>
<dbReference type="PANTHER" id="PTHR47926">
    <property type="entry name" value="PENTATRICOPEPTIDE REPEAT-CONTAINING PROTEIN"/>
    <property type="match status" value="1"/>
</dbReference>
<dbReference type="Pfam" id="PF20431">
    <property type="entry name" value="E_motif"/>
    <property type="match status" value="1"/>
</dbReference>
<dbReference type="Pfam" id="PF01535">
    <property type="entry name" value="PPR"/>
    <property type="match status" value="3"/>
</dbReference>
<dbReference type="Pfam" id="PF13041">
    <property type="entry name" value="PPR_2"/>
    <property type="match status" value="5"/>
</dbReference>
<dbReference type="SUPFAM" id="SSF48452">
    <property type="entry name" value="TPR-like"/>
    <property type="match status" value="1"/>
</dbReference>
<dbReference type="PROSITE" id="PS51375">
    <property type="entry name" value="PPR"/>
    <property type="match status" value="17"/>
</dbReference>
<keyword id="KW-1185">Reference proteome</keyword>
<keyword id="KW-0677">Repeat</keyword>
<name>PP329_ARATH</name>
<gene>
    <name type="primary">PCMP-E35</name>
    <name type="ordered locus">At4g20770</name>
    <name type="ORF">F21C20.120</name>
</gene>
<protein>
    <recommendedName>
        <fullName>Pentatricopeptide repeat-containing protein At4g20770</fullName>
    </recommendedName>
</protein>